<evidence type="ECO:0000255" key="1">
    <source>
        <dbReference type="HAMAP-Rule" id="MF_00300"/>
    </source>
</evidence>
<evidence type="ECO:0000256" key="2">
    <source>
        <dbReference type="SAM" id="MobiDB-lite"/>
    </source>
</evidence>
<protein>
    <recommendedName>
        <fullName evidence="1">Chorismate synthase</fullName>
        <shortName evidence="1">CS</shortName>
        <ecNumber evidence="1">4.2.3.5</ecNumber>
    </recommendedName>
    <alternativeName>
        <fullName evidence="1">5-enolpyruvylshikimate-3-phosphate phospholyase</fullName>
    </alternativeName>
</protein>
<gene>
    <name evidence="1" type="primary">aroC</name>
    <name type="ordered locus">PFL_4348</name>
</gene>
<comment type="function">
    <text evidence="1">Catalyzes the anti-1,4-elimination of the C-3 phosphate and the C-6 proR hydrogen from 5-enolpyruvylshikimate-3-phosphate (EPSP) to yield chorismate, which is the branch point compound that serves as the starting substrate for the three terminal pathways of aromatic amino acid biosynthesis. This reaction introduces a second double bond into the aromatic ring system.</text>
</comment>
<comment type="catalytic activity">
    <reaction evidence="1">
        <text>5-O-(1-carboxyvinyl)-3-phosphoshikimate = chorismate + phosphate</text>
        <dbReference type="Rhea" id="RHEA:21020"/>
        <dbReference type="ChEBI" id="CHEBI:29748"/>
        <dbReference type="ChEBI" id="CHEBI:43474"/>
        <dbReference type="ChEBI" id="CHEBI:57701"/>
        <dbReference type="EC" id="4.2.3.5"/>
    </reaction>
</comment>
<comment type="cofactor">
    <cofactor evidence="1">
        <name>FMNH2</name>
        <dbReference type="ChEBI" id="CHEBI:57618"/>
    </cofactor>
    <text evidence="1">Reduced FMN (FMNH(2)).</text>
</comment>
<comment type="pathway">
    <text evidence="1">Metabolic intermediate biosynthesis; chorismate biosynthesis; chorismate from D-erythrose 4-phosphate and phosphoenolpyruvate: step 7/7.</text>
</comment>
<comment type="subunit">
    <text evidence="1">Homotetramer.</text>
</comment>
<comment type="similarity">
    <text evidence="1">Belongs to the chorismate synthase family.</text>
</comment>
<accession>Q4K8J3</accession>
<proteinExistence type="inferred from homology"/>
<feature type="chain" id="PRO_0000256316" description="Chorismate synthase">
    <location>
        <begin position="1"/>
        <end position="363"/>
    </location>
</feature>
<feature type="region of interest" description="Disordered" evidence="2">
    <location>
        <begin position="44"/>
        <end position="63"/>
    </location>
</feature>
<feature type="binding site" evidence="1">
    <location>
        <position position="48"/>
    </location>
    <ligand>
        <name>NADP(+)</name>
        <dbReference type="ChEBI" id="CHEBI:58349"/>
    </ligand>
</feature>
<feature type="binding site" evidence="1">
    <location>
        <position position="54"/>
    </location>
    <ligand>
        <name>NADP(+)</name>
        <dbReference type="ChEBI" id="CHEBI:58349"/>
    </ligand>
</feature>
<feature type="binding site" evidence="1">
    <location>
        <begin position="125"/>
        <end position="127"/>
    </location>
    <ligand>
        <name>FMN</name>
        <dbReference type="ChEBI" id="CHEBI:58210"/>
    </ligand>
</feature>
<feature type="binding site" evidence="1">
    <location>
        <begin position="237"/>
        <end position="238"/>
    </location>
    <ligand>
        <name>FMN</name>
        <dbReference type="ChEBI" id="CHEBI:58210"/>
    </ligand>
</feature>
<feature type="binding site" evidence="1">
    <location>
        <position position="277"/>
    </location>
    <ligand>
        <name>FMN</name>
        <dbReference type="ChEBI" id="CHEBI:58210"/>
    </ligand>
</feature>
<feature type="binding site" evidence="1">
    <location>
        <begin position="292"/>
        <end position="296"/>
    </location>
    <ligand>
        <name>FMN</name>
        <dbReference type="ChEBI" id="CHEBI:58210"/>
    </ligand>
</feature>
<feature type="binding site" evidence="1">
    <location>
        <position position="318"/>
    </location>
    <ligand>
        <name>FMN</name>
        <dbReference type="ChEBI" id="CHEBI:58210"/>
    </ligand>
</feature>
<reference key="1">
    <citation type="journal article" date="2005" name="Nat. Biotechnol.">
        <title>Complete genome sequence of the plant commensal Pseudomonas fluorescens Pf-5.</title>
        <authorList>
            <person name="Paulsen I.T."/>
            <person name="Press C.M."/>
            <person name="Ravel J."/>
            <person name="Kobayashi D.Y."/>
            <person name="Myers G.S.A."/>
            <person name="Mavrodi D.V."/>
            <person name="DeBoy R.T."/>
            <person name="Seshadri R."/>
            <person name="Ren Q."/>
            <person name="Madupu R."/>
            <person name="Dodson R.J."/>
            <person name="Durkin A.S."/>
            <person name="Brinkac L.M."/>
            <person name="Daugherty S.C."/>
            <person name="Sullivan S.A."/>
            <person name="Rosovitz M.J."/>
            <person name="Gwinn M.L."/>
            <person name="Zhou L."/>
            <person name="Schneider D.J."/>
            <person name="Cartinhour S.W."/>
            <person name="Nelson W.C."/>
            <person name="Weidman J."/>
            <person name="Watkins K."/>
            <person name="Tran K."/>
            <person name="Khouri H."/>
            <person name="Pierson E.A."/>
            <person name="Pierson L.S. III"/>
            <person name="Thomashow L.S."/>
            <person name="Loper J.E."/>
        </authorList>
    </citation>
    <scope>NUCLEOTIDE SEQUENCE [LARGE SCALE GENOMIC DNA]</scope>
    <source>
        <strain>ATCC BAA-477 / NRRL B-23932 / Pf-5</strain>
    </source>
</reference>
<keyword id="KW-0028">Amino-acid biosynthesis</keyword>
<keyword id="KW-0057">Aromatic amino acid biosynthesis</keyword>
<keyword id="KW-0274">FAD</keyword>
<keyword id="KW-0285">Flavoprotein</keyword>
<keyword id="KW-0288">FMN</keyword>
<keyword id="KW-0456">Lyase</keyword>
<keyword id="KW-0521">NADP</keyword>
<organism>
    <name type="scientific">Pseudomonas fluorescens (strain ATCC BAA-477 / NRRL B-23932 / Pf-5)</name>
    <dbReference type="NCBI Taxonomy" id="220664"/>
    <lineage>
        <taxon>Bacteria</taxon>
        <taxon>Pseudomonadati</taxon>
        <taxon>Pseudomonadota</taxon>
        <taxon>Gammaproteobacteria</taxon>
        <taxon>Pseudomonadales</taxon>
        <taxon>Pseudomonadaceae</taxon>
        <taxon>Pseudomonas</taxon>
    </lineage>
</organism>
<sequence>MSGNTYGKLFTVTTAGESHGPALVAIVDGCPPGLELTLEDLQRDLDRRKPGTSRHTTQRQEPDEVEILSGVFEGKTTGCSIGLLIRNTDQKSKDYSAIKDLFRPAHADYSYHHKYGIRDYRGGGRSSARETAMRVAAGAIAKKYLASQGIVIRGYMSQLGPIEIPFKTWDSVENNAFFSPDPDKVAELEAYMDQLRRDQDSVGAKITVVAEGVMPGLGEPIFDRLDAELAHALMSINAVKGVEIGAGFACVAQRGTEHRDELTPQGFLSNNAGGILGGISSGQPIVAHLALKPTSSITTPGRSIDIDGNPVDVITKGRHDPCVGIRATPIAEAMMAIVLMDHLLRHRGQNADVRVSTPVLGQL</sequence>
<dbReference type="EC" id="4.2.3.5" evidence="1"/>
<dbReference type="EMBL" id="CP000076">
    <property type="protein sequence ID" value="AAY93603.1"/>
    <property type="molecule type" value="Genomic_DNA"/>
</dbReference>
<dbReference type="RefSeq" id="WP_011062618.1">
    <property type="nucleotide sequence ID" value="NC_004129.6"/>
</dbReference>
<dbReference type="SMR" id="Q4K8J3"/>
<dbReference type="STRING" id="220664.PFL_4348"/>
<dbReference type="KEGG" id="pfl:PFL_4348"/>
<dbReference type="PATRIC" id="fig|220664.5.peg.4455"/>
<dbReference type="eggNOG" id="COG0082">
    <property type="taxonomic scope" value="Bacteria"/>
</dbReference>
<dbReference type="HOGENOM" id="CLU_034547_0_2_6"/>
<dbReference type="UniPathway" id="UPA00053">
    <property type="reaction ID" value="UER00090"/>
</dbReference>
<dbReference type="Proteomes" id="UP000008540">
    <property type="component" value="Chromosome"/>
</dbReference>
<dbReference type="GO" id="GO:0005829">
    <property type="term" value="C:cytosol"/>
    <property type="evidence" value="ECO:0007669"/>
    <property type="project" value="TreeGrafter"/>
</dbReference>
<dbReference type="GO" id="GO:0004107">
    <property type="term" value="F:chorismate synthase activity"/>
    <property type="evidence" value="ECO:0007669"/>
    <property type="project" value="UniProtKB-UniRule"/>
</dbReference>
<dbReference type="GO" id="GO:0010181">
    <property type="term" value="F:FMN binding"/>
    <property type="evidence" value="ECO:0007669"/>
    <property type="project" value="TreeGrafter"/>
</dbReference>
<dbReference type="GO" id="GO:0008652">
    <property type="term" value="P:amino acid biosynthetic process"/>
    <property type="evidence" value="ECO:0007669"/>
    <property type="project" value="UniProtKB-KW"/>
</dbReference>
<dbReference type="GO" id="GO:0009073">
    <property type="term" value="P:aromatic amino acid family biosynthetic process"/>
    <property type="evidence" value="ECO:0007669"/>
    <property type="project" value="UniProtKB-KW"/>
</dbReference>
<dbReference type="GO" id="GO:0009423">
    <property type="term" value="P:chorismate biosynthetic process"/>
    <property type="evidence" value="ECO:0007669"/>
    <property type="project" value="UniProtKB-UniRule"/>
</dbReference>
<dbReference type="CDD" id="cd07304">
    <property type="entry name" value="Chorismate_synthase"/>
    <property type="match status" value="1"/>
</dbReference>
<dbReference type="FunFam" id="3.60.150.10:FF:000001">
    <property type="entry name" value="Chorismate synthase"/>
    <property type="match status" value="1"/>
</dbReference>
<dbReference type="Gene3D" id="3.60.150.10">
    <property type="entry name" value="Chorismate synthase AroC"/>
    <property type="match status" value="1"/>
</dbReference>
<dbReference type="HAMAP" id="MF_00300">
    <property type="entry name" value="Chorismate_synth"/>
    <property type="match status" value="1"/>
</dbReference>
<dbReference type="InterPro" id="IPR000453">
    <property type="entry name" value="Chorismate_synth"/>
</dbReference>
<dbReference type="InterPro" id="IPR035904">
    <property type="entry name" value="Chorismate_synth_AroC_sf"/>
</dbReference>
<dbReference type="InterPro" id="IPR020541">
    <property type="entry name" value="Chorismate_synthase_CS"/>
</dbReference>
<dbReference type="NCBIfam" id="TIGR00033">
    <property type="entry name" value="aroC"/>
    <property type="match status" value="1"/>
</dbReference>
<dbReference type="NCBIfam" id="NF003793">
    <property type="entry name" value="PRK05382.1"/>
    <property type="match status" value="1"/>
</dbReference>
<dbReference type="PANTHER" id="PTHR21085">
    <property type="entry name" value="CHORISMATE SYNTHASE"/>
    <property type="match status" value="1"/>
</dbReference>
<dbReference type="PANTHER" id="PTHR21085:SF0">
    <property type="entry name" value="CHORISMATE SYNTHASE"/>
    <property type="match status" value="1"/>
</dbReference>
<dbReference type="Pfam" id="PF01264">
    <property type="entry name" value="Chorismate_synt"/>
    <property type="match status" value="1"/>
</dbReference>
<dbReference type="PIRSF" id="PIRSF001456">
    <property type="entry name" value="Chorismate_synth"/>
    <property type="match status" value="1"/>
</dbReference>
<dbReference type="SUPFAM" id="SSF103263">
    <property type="entry name" value="Chorismate synthase, AroC"/>
    <property type="match status" value="1"/>
</dbReference>
<dbReference type="PROSITE" id="PS00787">
    <property type="entry name" value="CHORISMATE_SYNTHASE_1"/>
    <property type="match status" value="1"/>
</dbReference>
<dbReference type="PROSITE" id="PS00788">
    <property type="entry name" value="CHORISMATE_SYNTHASE_2"/>
    <property type="match status" value="1"/>
</dbReference>
<dbReference type="PROSITE" id="PS00789">
    <property type="entry name" value="CHORISMATE_SYNTHASE_3"/>
    <property type="match status" value="1"/>
</dbReference>
<name>AROC_PSEF5</name>